<reference key="1">
    <citation type="journal article" date="1999" name="Nature">
        <title>Sequence and analysis of chromosome 2 of the plant Arabidopsis thaliana.</title>
        <authorList>
            <person name="Lin X."/>
            <person name="Kaul S."/>
            <person name="Rounsley S.D."/>
            <person name="Shea T.P."/>
            <person name="Benito M.-I."/>
            <person name="Town C.D."/>
            <person name="Fujii C.Y."/>
            <person name="Mason T.M."/>
            <person name="Bowman C.L."/>
            <person name="Barnstead M.E."/>
            <person name="Feldblyum T.V."/>
            <person name="Buell C.R."/>
            <person name="Ketchum K.A."/>
            <person name="Lee J.J."/>
            <person name="Ronning C.M."/>
            <person name="Koo H.L."/>
            <person name="Moffat K.S."/>
            <person name="Cronin L.A."/>
            <person name="Shen M."/>
            <person name="Pai G."/>
            <person name="Van Aken S."/>
            <person name="Umayam L."/>
            <person name="Tallon L.J."/>
            <person name="Gill J.E."/>
            <person name="Adams M.D."/>
            <person name="Carrera A.J."/>
            <person name="Creasy T.H."/>
            <person name="Goodman H.M."/>
            <person name="Somerville C.R."/>
            <person name="Copenhaver G.P."/>
            <person name="Preuss D."/>
            <person name="Nierman W.C."/>
            <person name="White O."/>
            <person name="Eisen J.A."/>
            <person name="Salzberg S.L."/>
            <person name="Fraser C.M."/>
            <person name="Venter J.C."/>
        </authorList>
    </citation>
    <scope>NUCLEOTIDE SEQUENCE [LARGE SCALE GENOMIC DNA]</scope>
    <source>
        <strain>cv. Columbia</strain>
    </source>
</reference>
<reference key="2">
    <citation type="journal article" date="2017" name="Plant J.">
        <title>Araport11: a complete reannotation of the Arabidopsis thaliana reference genome.</title>
        <authorList>
            <person name="Cheng C.Y."/>
            <person name="Krishnakumar V."/>
            <person name="Chan A.P."/>
            <person name="Thibaud-Nissen F."/>
            <person name="Schobel S."/>
            <person name="Town C.D."/>
        </authorList>
    </citation>
    <scope>GENOME REANNOTATION</scope>
    <source>
        <strain>cv. Columbia</strain>
    </source>
</reference>
<reference key="3">
    <citation type="journal article" date="2003" name="Science">
        <title>Empirical analysis of transcriptional activity in the Arabidopsis genome.</title>
        <authorList>
            <person name="Yamada K."/>
            <person name="Lim J."/>
            <person name="Dale J.M."/>
            <person name="Chen H."/>
            <person name="Shinn P."/>
            <person name="Palm C.J."/>
            <person name="Southwick A.M."/>
            <person name="Wu H.C."/>
            <person name="Kim C.J."/>
            <person name="Nguyen M."/>
            <person name="Pham P.K."/>
            <person name="Cheuk R.F."/>
            <person name="Karlin-Newmann G."/>
            <person name="Liu S.X."/>
            <person name="Lam B."/>
            <person name="Sakano H."/>
            <person name="Wu T."/>
            <person name="Yu G."/>
            <person name="Miranda M."/>
            <person name="Quach H.L."/>
            <person name="Tripp M."/>
            <person name="Chang C.H."/>
            <person name="Lee J.M."/>
            <person name="Toriumi M.J."/>
            <person name="Chan M.M."/>
            <person name="Tang C.C."/>
            <person name="Onodera C.S."/>
            <person name="Deng J.M."/>
            <person name="Akiyama K."/>
            <person name="Ansari Y."/>
            <person name="Arakawa T."/>
            <person name="Banh J."/>
            <person name="Banno F."/>
            <person name="Bowser L."/>
            <person name="Brooks S.Y."/>
            <person name="Carninci P."/>
            <person name="Chao Q."/>
            <person name="Choy N."/>
            <person name="Enju A."/>
            <person name="Goldsmith A.D."/>
            <person name="Gurjal M."/>
            <person name="Hansen N.F."/>
            <person name="Hayashizaki Y."/>
            <person name="Johnson-Hopson C."/>
            <person name="Hsuan V.W."/>
            <person name="Iida K."/>
            <person name="Karnes M."/>
            <person name="Khan S."/>
            <person name="Koesema E."/>
            <person name="Ishida J."/>
            <person name="Jiang P.X."/>
            <person name="Jones T."/>
            <person name="Kawai J."/>
            <person name="Kamiya A."/>
            <person name="Meyers C."/>
            <person name="Nakajima M."/>
            <person name="Narusaka M."/>
            <person name="Seki M."/>
            <person name="Sakurai T."/>
            <person name="Satou M."/>
            <person name="Tamse R."/>
            <person name="Vaysberg M."/>
            <person name="Wallender E.K."/>
            <person name="Wong C."/>
            <person name="Yamamura Y."/>
            <person name="Yuan S."/>
            <person name="Shinozaki K."/>
            <person name="Davis R.W."/>
            <person name="Theologis A."/>
            <person name="Ecker J.R."/>
        </authorList>
    </citation>
    <scope>NUCLEOTIDE SEQUENCE [LARGE SCALE MRNA]</scope>
    <source>
        <strain>cv. Columbia</strain>
    </source>
</reference>
<reference key="4">
    <citation type="journal article" date="2004" name="Plant Mol. Biol.">
        <title>Nomenclature for members of the expansin superfamily of genes and proteins.</title>
        <authorList>
            <person name="Kende H."/>
            <person name="Bradford K.J."/>
            <person name="Brummell D.A."/>
            <person name="Cho H.-T."/>
            <person name="Cosgrove D.J."/>
            <person name="Fleming A.J."/>
            <person name="Gehring C."/>
            <person name="Lee Y."/>
            <person name="McQueen-Mason S.J."/>
            <person name="Rose J.K.C."/>
            <person name="Voesenek L.A.C."/>
        </authorList>
    </citation>
    <scope>NOMENCLATURE</scope>
</reference>
<name>EXPA3_ARATH</name>
<proteinExistence type="evidence at transcript level"/>
<feature type="signal peptide" evidence="2">
    <location>
        <begin position="1"/>
        <end position="25"/>
    </location>
</feature>
<feature type="chain" id="PRO_0000008684" description="Expansin-A3">
    <location>
        <begin position="26"/>
        <end position="262"/>
    </location>
</feature>
<feature type="domain" description="Expansin-like EG45" evidence="4">
    <location>
        <begin position="54"/>
        <end position="168"/>
    </location>
</feature>
<feature type="domain" description="Expansin-like CBD" evidence="3">
    <location>
        <begin position="178"/>
        <end position="257"/>
    </location>
</feature>
<feature type="disulfide bond" evidence="4">
    <location>
        <begin position="57"/>
        <end position="85"/>
    </location>
</feature>
<feature type="disulfide bond" evidence="4">
    <location>
        <begin position="88"/>
        <end position="163"/>
    </location>
</feature>
<feature type="disulfide bond" evidence="4">
    <location>
        <begin position="93"/>
        <end position="100"/>
    </location>
</feature>
<sequence>MTATAFRVGLWLAVTASFLLTATNAKIPGVYSGGPWQNAHATFYGGSDASGTMGGACGYGNLYSQGYGVNTAALSTALFNNGFSCGACFEIKCTDDPRWCVPGNPSILVTATNFCPPNFAQPSDDGGWCNPPREHFDLAMPMFLKIGLYRAGIVPVSYRRVPCRKIGGIRFTVNGFRYFNLVLVTNVAGAGDINGVSVKGSKTDWVRMSRNWGQNWQSNAVLIGQSLSFRVTASDRRSSTSWNVAPATWQFGQTFSGKNFRV</sequence>
<comment type="function">
    <text evidence="1">Causes loosening and extension of plant cell walls by disrupting non-covalent bonding between cellulose microfibrils and matrix glucans. No enzymatic activity has been found (By similarity).</text>
</comment>
<comment type="subcellular location">
    <subcellularLocation>
        <location>Secreted</location>
        <location>Cell wall</location>
    </subcellularLocation>
    <subcellularLocation>
        <location>Membrane</location>
        <topology>Peripheral membrane protein</topology>
    </subcellularLocation>
</comment>
<comment type="similarity">
    <text evidence="5">Belongs to the expansin family. Expansin A subfamily.</text>
</comment>
<comment type="online information" name="EXPANSIN homepage">
    <link uri="https://www.dept.psu.edu/biology/groups/expansins/index.htm"/>
</comment>
<evidence type="ECO:0000250" key="1"/>
<evidence type="ECO:0000255" key="2"/>
<evidence type="ECO:0000255" key="3">
    <source>
        <dbReference type="PROSITE-ProRule" id="PRU00078"/>
    </source>
</evidence>
<evidence type="ECO:0000255" key="4">
    <source>
        <dbReference type="PROSITE-ProRule" id="PRU00079"/>
    </source>
</evidence>
<evidence type="ECO:0000305" key="5"/>
<keyword id="KW-0134">Cell wall</keyword>
<keyword id="KW-0961">Cell wall biogenesis/degradation</keyword>
<keyword id="KW-1015">Disulfide bond</keyword>
<keyword id="KW-0472">Membrane</keyword>
<keyword id="KW-1185">Reference proteome</keyword>
<keyword id="KW-0964">Secreted</keyword>
<keyword id="KW-0732">Signal</keyword>
<dbReference type="EMBL" id="AC004684">
    <property type="protein sequence ID" value="AAC23634.1"/>
    <property type="molecule type" value="Genomic_DNA"/>
</dbReference>
<dbReference type="EMBL" id="CP002685">
    <property type="protein sequence ID" value="AEC09429.1"/>
    <property type="molecule type" value="Genomic_DNA"/>
</dbReference>
<dbReference type="EMBL" id="AY090368">
    <property type="protein sequence ID" value="AAL91271.1"/>
    <property type="molecule type" value="mRNA"/>
</dbReference>
<dbReference type="EMBL" id="AY122898">
    <property type="protein sequence ID" value="AAM67431.1"/>
    <property type="molecule type" value="mRNA"/>
</dbReference>
<dbReference type="PIR" id="T02530">
    <property type="entry name" value="T02530"/>
</dbReference>
<dbReference type="RefSeq" id="NP_181300.1">
    <property type="nucleotide sequence ID" value="NM_129320.4"/>
</dbReference>
<dbReference type="SMR" id="O80932"/>
<dbReference type="FunCoup" id="O80932">
    <property type="interactions" value="1"/>
</dbReference>
<dbReference type="STRING" id="3702.O80932"/>
<dbReference type="PaxDb" id="3702-AT2G37640.1"/>
<dbReference type="ProteomicsDB" id="222238"/>
<dbReference type="EnsemblPlants" id="AT2G37640.1">
    <property type="protein sequence ID" value="AT2G37640.1"/>
    <property type="gene ID" value="AT2G37640"/>
</dbReference>
<dbReference type="GeneID" id="818341"/>
<dbReference type="Gramene" id="AT2G37640.1">
    <property type="protein sequence ID" value="AT2G37640.1"/>
    <property type="gene ID" value="AT2G37640"/>
</dbReference>
<dbReference type="KEGG" id="ath:AT2G37640"/>
<dbReference type="Araport" id="AT2G37640"/>
<dbReference type="TAIR" id="AT2G37640">
    <property type="gene designation" value="EXP3"/>
</dbReference>
<dbReference type="eggNOG" id="ENOG502SI5V">
    <property type="taxonomic scope" value="Eukaryota"/>
</dbReference>
<dbReference type="HOGENOM" id="CLU_027462_0_1_1"/>
<dbReference type="InParanoid" id="O80932"/>
<dbReference type="OMA" id="TRMMEYL"/>
<dbReference type="OrthoDB" id="5823761at2759"/>
<dbReference type="PhylomeDB" id="O80932"/>
<dbReference type="PRO" id="PR:O80932"/>
<dbReference type="Proteomes" id="UP000006548">
    <property type="component" value="Chromosome 2"/>
</dbReference>
<dbReference type="ExpressionAtlas" id="O80932">
    <property type="expression patterns" value="baseline and differential"/>
</dbReference>
<dbReference type="GO" id="GO:0005576">
    <property type="term" value="C:extracellular region"/>
    <property type="evidence" value="ECO:0007669"/>
    <property type="project" value="UniProtKB-KW"/>
</dbReference>
<dbReference type="GO" id="GO:0016020">
    <property type="term" value="C:membrane"/>
    <property type="evidence" value="ECO:0007669"/>
    <property type="project" value="UniProtKB-SubCell"/>
</dbReference>
<dbReference type="GO" id="GO:0009828">
    <property type="term" value="P:plant-type cell wall loosening"/>
    <property type="evidence" value="ECO:0000250"/>
    <property type="project" value="UniProtKB"/>
</dbReference>
<dbReference type="GO" id="GO:0009739">
    <property type="term" value="P:response to gibberellin"/>
    <property type="evidence" value="ECO:0000304"/>
    <property type="project" value="TAIR"/>
</dbReference>
<dbReference type="GO" id="GO:0010114">
    <property type="term" value="P:response to red light"/>
    <property type="evidence" value="ECO:0000270"/>
    <property type="project" value="TAIR"/>
</dbReference>
<dbReference type="GO" id="GO:0006949">
    <property type="term" value="P:syncytium formation"/>
    <property type="evidence" value="ECO:0000270"/>
    <property type="project" value="TAIR"/>
</dbReference>
<dbReference type="CDD" id="cd22274">
    <property type="entry name" value="DPBB_EXPA_N"/>
    <property type="match status" value="1"/>
</dbReference>
<dbReference type="FunFam" id="2.40.40.10:FF:000001">
    <property type="entry name" value="Expansin"/>
    <property type="match status" value="1"/>
</dbReference>
<dbReference type="FunFam" id="2.60.40.760:FF:000001">
    <property type="entry name" value="Expansin"/>
    <property type="match status" value="1"/>
</dbReference>
<dbReference type="Gene3D" id="2.60.40.760">
    <property type="entry name" value="Expansin, cellulose-binding-like domain"/>
    <property type="match status" value="1"/>
</dbReference>
<dbReference type="Gene3D" id="2.40.40.10">
    <property type="entry name" value="RlpA-like domain"/>
    <property type="match status" value="1"/>
</dbReference>
<dbReference type="InterPro" id="IPR007118">
    <property type="entry name" value="Expan_Lol_pI"/>
</dbReference>
<dbReference type="InterPro" id="IPR002963">
    <property type="entry name" value="Expansin"/>
</dbReference>
<dbReference type="InterPro" id="IPR007112">
    <property type="entry name" value="Expansin/allergen_DPBB_dom"/>
</dbReference>
<dbReference type="InterPro" id="IPR007117">
    <property type="entry name" value="Expansin_CBD"/>
</dbReference>
<dbReference type="InterPro" id="IPR036749">
    <property type="entry name" value="Expansin_CBD_sf"/>
</dbReference>
<dbReference type="InterPro" id="IPR009009">
    <property type="entry name" value="RlpA-like_DPBB"/>
</dbReference>
<dbReference type="InterPro" id="IPR036908">
    <property type="entry name" value="RlpA-like_sf"/>
</dbReference>
<dbReference type="PANTHER" id="PTHR31867">
    <property type="entry name" value="EXPANSIN-A15"/>
    <property type="match status" value="1"/>
</dbReference>
<dbReference type="Pfam" id="PF03330">
    <property type="entry name" value="DPBB_1"/>
    <property type="match status" value="1"/>
</dbReference>
<dbReference type="Pfam" id="PF01357">
    <property type="entry name" value="Expansin_C"/>
    <property type="match status" value="1"/>
</dbReference>
<dbReference type="PRINTS" id="PR01226">
    <property type="entry name" value="EXPANSIN"/>
</dbReference>
<dbReference type="PRINTS" id="PR01225">
    <property type="entry name" value="EXPANSNFAMLY"/>
</dbReference>
<dbReference type="SMART" id="SM00837">
    <property type="entry name" value="DPBB_1"/>
    <property type="match status" value="1"/>
</dbReference>
<dbReference type="SUPFAM" id="SSF50685">
    <property type="entry name" value="Barwin-like endoglucanases"/>
    <property type="match status" value="1"/>
</dbReference>
<dbReference type="SUPFAM" id="SSF49590">
    <property type="entry name" value="PHL pollen allergen"/>
    <property type="match status" value="1"/>
</dbReference>
<dbReference type="PROSITE" id="PS50843">
    <property type="entry name" value="EXPANSIN_CBD"/>
    <property type="match status" value="1"/>
</dbReference>
<dbReference type="PROSITE" id="PS50842">
    <property type="entry name" value="EXPANSIN_EG45"/>
    <property type="match status" value="1"/>
</dbReference>
<accession>O80932</accession>
<protein>
    <recommendedName>
        <fullName>Expansin-A3</fullName>
        <shortName>AtEXPA3</shortName>
    </recommendedName>
    <alternativeName>
        <fullName>Alpha-expansin-3</fullName>
        <shortName>At-EXP3</shortName>
        <shortName>AtEx3</shortName>
    </alternativeName>
    <alternativeName>
        <fullName>Ath-ExpAlpha-1.9</fullName>
    </alternativeName>
</protein>
<gene>
    <name type="primary">EXPA3</name>
    <name type="synonym">EXP3</name>
    <name type="ordered locus">At2g37640</name>
    <name type="ORF">F13M22.14</name>
</gene>
<organism>
    <name type="scientific">Arabidopsis thaliana</name>
    <name type="common">Mouse-ear cress</name>
    <dbReference type="NCBI Taxonomy" id="3702"/>
    <lineage>
        <taxon>Eukaryota</taxon>
        <taxon>Viridiplantae</taxon>
        <taxon>Streptophyta</taxon>
        <taxon>Embryophyta</taxon>
        <taxon>Tracheophyta</taxon>
        <taxon>Spermatophyta</taxon>
        <taxon>Magnoliopsida</taxon>
        <taxon>eudicotyledons</taxon>
        <taxon>Gunneridae</taxon>
        <taxon>Pentapetalae</taxon>
        <taxon>rosids</taxon>
        <taxon>malvids</taxon>
        <taxon>Brassicales</taxon>
        <taxon>Brassicaceae</taxon>
        <taxon>Camelineae</taxon>
        <taxon>Arabidopsis</taxon>
    </lineage>
</organism>